<protein>
    <recommendedName>
        <fullName evidence="1">Large ribosomal subunit protein uL18</fullName>
    </recommendedName>
    <alternativeName>
        <fullName evidence="2">50S ribosomal protein L18</fullName>
    </alternativeName>
</protein>
<comment type="function">
    <text evidence="1">This is one of the proteins that bind and probably mediate the attachment of the 5S RNA into the large ribosomal subunit, where it forms part of the central protuberance.</text>
</comment>
<comment type="subunit">
    <text evidence="1">Part of the 50S ribosomal subunit; part of the 5S rRNA/L5/L18/L25 subcomplex. Contacts the 5S and 23S rRNAs.</text>
</comment>
<comment type="similarity">
    <text evidence="1">Belongs to the universal ribosomal protein uL18 family.</text>
</comment>
<accession>Q7MYG7</accession>
<dbReference type="EMBL" id="BX571874">
    <property type="protein sequence ID" value="CAE17082.1"/>
    <property type="molecule type" value="Genomic_DNA"/>
</dbReference>
<dbReference type="RefSeq" id="WP_011148779.1">
    <property type="nucleotide sequence ID" value="NC_005126.1"/>
</dbReference>
<dbReference type="SMR" id="Q7MYG7"/>
<dbReference type="STRING" id="243265.plu4710"/>
<dbReference type="GeneID" id="88808142"/>
<dbReference type="KEGG" id="plu:plu4710"/>
<dbReference type="eggNOG" id="COG0256">
    <property type="taxonomic scope" value="Bacteria"/>
</dbReference>
<dbReference type="HOGENOM" id="CLU_098841_0_1_6"/>
<dbReference type="OrthoDB" id="9810939at2"/>
<dbReference type="Proteomes" id="UP000002514">
    <property type="component" value="Chromosome"/>
</dbReference>
<dbReference type="GO" id="GO:0022625">
    <property type="term" value="C:cytosolic large ribosomal subunit"/>
    <property type="evidence" value="ECO:0007669"/>
    <property type="project" value="TreeGrafter"/>
</dbReference>
<dbReference type="GO" id="GO:0008097">
    <property type="term" value="F:5S rRNA binding"/>
    <property type="evidence" value="ECO:0007669"/>
    <property type="project" value="TreeGrafter"/>
</dbReference>
<dbReference type="GO" id="GO:0003735">
    <property type="term" value="F:structural constituent of ribosome"/>
    <property type="evidence" value="ECO:0007669"/>
    <property type="project" value="InterPro"/>
</dbReference>
<dbReference type="GO" id="GO:0006412">
    <property type="term" value="P:translation"/>
    <property type="evidence" value="ECO:0007669"/>
    <property type="project" value="UniProtKB-UniRule"/>
</dbReference>
<dbReference type="CDD" id="cd00432">
    <property type="entry name" value="Ribosomal_L18_L5e"/>
    <property type="match status" value="1"/>
</dbReference>
<dbReference type="FunFam" id="3.30.420.100:FF:000001">
    <property type="entry name" value="50S ribosomal protein L18"/>
    <property type="match status" value="1"/>
</dbReference>
<dbReference type="Gene3D" id="3.30.420.100">
    <property type="match status" value="1"/>
</dbReference>
<dbReference type="HAMAP" id="MF_01337_B">
    <property type="entry name" value="Ribosomal_uL18_B"/>
    <property type="match status" value="1"/>
</dbReference>
<dbReference type="InterPro" id="IPR004389">
    <property type="entry name" value="Ribosomal_uL18_bac-type"/>
</dbReference>
<dbReference type="InterPro" id="IPR005484">
    <property type="entry name" value="Ribosomal_uL18_bac/euk"/>
</dbReference>
<dbReference type="NCBIfam" id="TIGR00060">
    <property type="entry name" value="L18_bact"/>
    <property type="match status" value="1"/>
</dbReference>
<dbReference type="PANTHER" id="PTHR12899">
    <property type="entry name" value="39S RIBOSOMAL PROTEIN L18, MITOCHONDRIAL"/>
    <property type="match status" value="1"/>
</dbReference>
<dbReference type="PANTHER" id="PTHR12899:SF3">
    <property type="entry name" value="LARGE RIBOSOMAL SUBUNIT PROTEIN UL18M"/>
    <property type="match status" value="1"/>
</dbReference>
<dbReference type="Pfam" id="PF00861">
    <property type="entry name" value="Ribosomal_L18p"/>
    <property type="match status" value="1"/>
</dbReference>
<dbReference type="SUPFAM" id="SSF53137">
    <property type="entry name" value="Translational machinery components"/>
    <property type="match status" value="1"/>
</dbReference>
<proteinExistence type="inferred from homology"/>
<keyword id="KW-1185">Reference proteome</keyword>
<keyword id="KW-0687">Ribonucleoprotein</keyword>
<keyword id="KW-0689">Ribosomal protein</keyword>
<keyword id="KW-0694">RNA-binding</keyword>
<keyword id="KW-0699">rRNA-binding</keyword>
<evidence type="ECO:0000255" key="1">
    <source>
        <dbReference type="HAMAP-Rule" id="MF_01337"/>
    </source>
</evidence>
<evidence type="ECO:0000305" key="2"/>
<organism>
    <name type="scientific">Photorhabdus laumondii subsp. laumondii (strain DSM 15139 / CIP 105565 / TT01)</name>
    <name type="common">Photorhabdus luminescens subsp. laumondii</name>
    <dbReference type="NCBI Taxonomy" id="243265"/>
    <lineage>
        <taxon>Bacteria</taxon>
        <taxon>Pseudomonadati</taxon>
        <taxon>Pseudomonadota</taxon>
        <taxon>Gammaproteobacteria</taxon>
        <taxon>Enterobacterales</taxon>
        <taxon>Morganellaceae</taxon>
        <taxon>Photorhabdus</taxon>
    </lineage>
</organism>
<reference key="1">
    <citation type="journal article" date="2003" name="Nat. Biotechnol.">
        <title>The genome sequence of the entomopathogenic bacterium Photorhabdus luminescens.</title>
        <authorList>
            <person name="Duchaud E."/>
            <person name="Rusniok C."/>
            <person name="Frangeul L."/>
            <person name="Buchrieser C."/>
            <person name="Givaudan A."/>
            <person name="Taourit S."/>
            <person name="Bocs S."/>
            <person name="Boursaux-Eude C."/>
            <person name="Chandler M."/>
            <person name="Charles J.-F."/>
            <person name="Dassa E."/>
            <person name="Derose R."/>
            <person name="Derzelle S."/>
            <person name="Freyssinet G."/>
            <person name="Gaudriault S."/>
            <person name="Medigue C."/>
            <person name="Lanois A."/>
            <person name="Powell K."/>
            <person name="Siguier P."/>
            <person name="Vincent R."/>
            <person name="Wingate V."/>
            <person name="Zouine M."/>
            <person name="Glaser P."/>
            <person name="Boemare N."/>
            <person name="Danchin A."/>
            <person name="Kunst F."/>
        </authorList>
    </citation>
    <scope>NUCLEOTIDE SEQUENCE [LARGE SCALE GENOMIC DNA]</scope>
    <source>
        <strain>DSM 15139 / CIP 105565 / TT01</strain>
    </source>
</reference>
<name>RL18_PHOLL</name>
<feature type="chain" id="PRO_0000131315" description="Large ribosomal subunit protein uL18">
    <location>
        <begin position="1"/>
        <end position="117"/>
    </location>
</feature>
<sequence>MDKKAARIRRATRARRKLQELGATRLVVHRTPRHIYAQVIAPNGSETLVAASTTEKAINEQLKYTGNKEAAAAVGKAIAERALEKGIKDVSFDRSGFQYHGRVQALADAAREAGLQF</sequence>
<gene>
    <name evidence="1" type="primary">rplR</name>
    <name type="ordered locus">plu4710</name>
</gene>